<organism>
    <name type="scientific">Streptococcus pneumoniae serotype 4 (strain ATCC BAA-334 / TIGR4)</name>
    <dbReference type="NCBI Taxonomy" id="170187"/>
    <lineage>
        <taxon>Bacteria</taxon>
        <taxon>Bacillati</taxon>
        <taxon>Bacillota</taxon>
        <taxon>Bacilli</taxon>
        <taxon>Lactobacillales</taxon>
        <taxon>Streptococcaceae</taxon>
        <taxon>Streptococcus</taxon>
    </lineage>
</organism>
<accession>Q97NV8</accession>
<evidence type="ECO:0000250" key="1"/>
<evidence type="ECO:0000255" key="2">
    <source>
        <dbReference type="PROSITE-ProRule" id="PRU00208"/>
    </source>
</evidence>
<evidence type="ECO:0000255" key="3">
    <source>
        <dbReference type="PROSITE-ProRule" id="PRU01024"/>
    </source>
</evidence>
<evidence type="ECO:0000305" key="4"/>
<protein>
    <recommendedName>
        <fullName>Uncharacterized RNA methyltransferase SP_1901</fullName>
        <ecNumber>2.1.1.-</ecNumber>
    </recommendedName>
</protein>
<feature type="chain" id="PRO_0000162032" description="Uncharacterized RNA methyltransferase SP_1901">
    <location>
        <begin position="1"/>
        <end position="451"/>
    </location>
</feature>
<feature type="domain" description="TRAM" evidence="2">
    <location>
        <begin position="2"/>
        <end position="60"/>
    </location>
</feature>
<feature type="active site" description="Nucleophile" evidence="3">
    <location>
        <position position="408"/>
    </location>
</feature>
<feature type="binding site" evidence="1">
    <location>
        <position position="73"/>
    </location>
    <ligand>
        <name>[4Fe-4S] cluster</name>
        <dbReference type="ChEBI" id="CHEBI:49883"/>
    </ligand>
</feature>
<feature type="binding site" evidence="1">
    <location>
        <position position="79"/>
    </location>
    <ligand>
        <name>[4Fe-4S] cluster</name>
        <dbReference type="ChEBI" id="CHEBI:49883"/>
    </ligand>
</feature>
<feature type="binding site" evidence="1">
    <location>
        <position position="82"/>
    </location>
    <ligand>
        <name>[4Fe-4S] cluster</name>
        <dbReference type="ChEBI" id="CHEBI:49883"/>
    </ligand>
</feature>
<feature type="binding site" evidence="1">
    <location>
        <position position="162"/>
    </location>
    <ligand>
        <name>[4Fe-4S] cluster</name>
        <dbReference type="ChEBI" id="CHEBI:49883"/>
    </ligand>
</feature>
<feature type="binding site" evidence="3">
    <location>
        <position position="283"/>
    </location>
    <ligand>
        <name>S-adenosyl-L-methionine</name>
        <dbReference type="ChEBI" id="CHEBI:59789"/>
    </ligand>
</feature>
<feature type="binding site" evidence="3">
    <location>
        <position position="312"/>
    </location>
    <ligand>
        <name>S-adenosyl-L-methionine</name>
        <dbReference type="ChEBI" id="CHEBI:59789"/>
    </ligand>
</feature>
<feature type="binding site" evidence="3">
    <location>
        <position position="333"/>
    </location>
    <ligand>
        <name>S-adenosyl-L-methionine</name>
        <dbReference type="ChEBI" id="CHEBI:59789"/>
    </ligand>
</feature>
<feature type="binding site" evidence="3">
    <location>
        <position position="381"/>
    </location>
    <ligand>
        <name>S-adenosyl-L-methionine</name>
        <dbReference type="ChEBI" id="CHEBI:59789"/>
    </ligand>
</feature>
<proteinExistence type="inferred from homology"/>
<keyword id="KW-0004">4Fe-4S</keyword>
<keyword id="KW-0408">Iron</keyword>
<keyword id="KW-0411">Iron-sulfur</keyword>
<keyword id="KW-0479">Metal-binding</keyword>
<keyword id="KW-0489">Methyltransferase</keyword>
<keyword id="KW-1185">Reference proteome</keyword>
<keyword id="KW-0949">S-adenosyl-L-methionine</keyword>
<keyword id="KW-0808">Transferase</keyword>
<reference key="1">
    <citation type="journal article" date="2001" name="Science">
        <title>Complete genome sequence of a virulent isolate of Streptococcus pneumoniae.</title>
        <authorList>
            <person name="Tettelin H."/>
            <person name="Nelson K.E."/>
            <person name="Paulsen I.T."/>
            <person name="Eisen J.A."/>
            <person name="Read T.D."/>
            <person name="Peterson S.N."/>
            <person name="Heidelberg J.F."/>
            <person name="DeBoy R.T."/>
            <person name="Haft D.H."/>
            <person name="Dodson R.J."/>
            <person name="Durkin A.S."/>
            <person name="Gwinn M.L."/>
            <person name="Kolonay J.F."/>
            <person name="Nelson W.C."/>
            <person name="Peterson J.D."/>
            <person name="Umayam L.A."/>
            <person name="White O."/>
            <person name="Salzberg S.L."/>
            <person name="Lewis M.R."/>
            <person name="Radune D."/>
            <person name="Holtzapple E.K."/>
            <person name="Khouri H.M."/>
            <person name="Wolf A.M."/>
            <person name="Utterback T.R."/>
            <person name="Hansen C.L."/>
            <person name="McDonald L.A."/>
            <person name="Feldblyum T.V."/>
            <person name="Angiuoli S.V."/>
            <person name="Dickinson T."/>
            <person name="Hickey E.K."/>
            <person name="Holt I.E."/>
            <person name="Loftus B.J."/>
            <person name="Yang F."/>
            <person name="Smith H.O."/>
            <person name="Venter J.C."/>
            <person name="Dougherty B.A."/>
            <person name="Morrison D.A."/>
            <person name="Hollingshead S.K."/>
            <person name="Fraser C.M."/>
        </authorList>
    </citation>
    <scope>NUCLEOTIDE SEQUENCE [LARGE SCALE GENOMIC DNA]</scope>
    <source>
        <strain>ATCC BAA-334 / TIGR4</strain>
    </source>
</reference>
<gene>
    <name type="ordered locus">SP_1901</name>
</gene>
<sequence length="451" mass="51742">MNLKVKQKIPLKIKRMGINGEGIGFYQKTLVFVPGALKGEDIYCQITSIRRNFVEAKLLKVNKKSKFRIVPSCTIYNECGGCQIMHLHYDKQLEFKTDLLHQALKKFAPAGYENYEIRPTIGMQEPKYYRAKLQFQTRKFKNQVKAGLYAQNSHYLVELKDCLVQDKETQVIANRLAELLTYHQIPITDERKVLGVRTIMVRRARKTGQVQIIIVTNRQLNLTQLVKELVKDFPEVVTVAVNTNTAKTSEIYGEKTEIIWGQESIQEGVLNYEFSLSPRAFYQLNPEQTEVLYSEAVKALDVDKEDHLIDAYCGVGTIGFAFAKKVKTLRGMDIIPEAIEDAKRNAKRMGFDNTHYEAGTAEEIIPRWYKEGYRADALIVDPPRTGLDDKLLDTILTYVPEKMVYISCNVSTLARDLVRLVEVYDLHYIQSVDMFPHTARTEAVVKLIKKV</sequence>
<name>Y1901_STRPN</name>
<comment type="similarity">
    <text evidence="3">Belongs to the class I-like SAM-binding methyltransferase superfamily. RNA M5U methyltransferase family.</text>
</comment>
<comment type="sequence caution" evidence="4">
    <conflict type="erroneous initiation">
        <sequence resource="EMBL-CDS" id="AAK75972"/>
    </conflict>
</comment>
<dbReference type="EC" id="2.1.1.-"/>
<dbReference type="EMBL" id="AE005672">
    <property type="protein sequence ID" value="AAK75972.1"/>
    <property type="status" value="ALT_INIT"/>
    <property type="molecule type" value="Genomic_DNA"/>
</dbReference>
<dbReference type="PIR" id="C95222">
    <property type="entry name" value="C95222"/>
</dbReference>
<dbReference type="SMR" id="Q97NV8"/>
<dbReference type="PaxDb" id="170187-SP_1901"/>
<dbReference type="EnsemblBacteria" id="AAK75972">
    <property type="protein sequence ID" value="AAK75972"/>
    <property type="gene ID" value="SP_1901"/>
</dbReference>
<dbReference type="KEGG" id="spn:SP_1901"/>
<dbReference type="eggNOG" id="COG2265">
    <property type="taxonomic scope" value="Bacteria"/>
</dbReference>
<dbReference type="PhylomeDB" id="Q97NV8"/>
<dbReference type="BioCyc" id="SPNE170187:G1FZB-1954-MONOMER"/>
<dbReference type="Proteomes" id="UP000000585">
    <property type="component" value="Chromosome"/>
</dbReference>
<dbReference type="GO" id="GO:0051539">
    <property type="term" value="F:4 iron, 4 sulfur cluster binding"/>
    <property type="evidence" value="ECO:0007669"/>
    <property type="project" value="UniProtKB-KW"/>
</dbReference>
<dbReference type="GO" id="GO:0046872">
    <property type="term" value="F:metal ion binding"/>
    <property type="evidence" value="ECO:0007669"/>
    <property type="project" value="UniProtKB-KW"/>
</dbReference>
<dbReference type="GO" id="GO:0070041">
    <property type="term" value="F:rRNA (uridine-C5-)-methyltransferase activity"/>
    <property type="evidence" value="ECO:0007669"/>
    <property type="project" value="TreeGrafter"/>
</dbReference>
<dbReference type="GO" id="GO:0070475">
    <property type="term" value="P:rRNA base methylation"/>
    <property type="evidence" value="ECO:0007669"/>
    <property type="project" value="TreeGrafter"/>
</dbReference>
<dbReference type="CDD" id="cd02440">
    <property type="entry name" value="AdoMet_MTases"/>
    <property type="match status" value="1"/>
</dbReference>
<dbReference type="FunFam" id="3.40.50.150:FF:000009">
    <property type="entry name" value="23S rRNA (Uracil(1939)-C(5))-methyltransferase RlmD"/>
    <property type="match status" value="1"/>
</dbReference>
<dbReference type="FunFam" id="2.40.50.140:FF:000097">
    <property type="entry name" value="23S rRNA (uracil(1939)-C(5))-methyltransferase RlmD"/>
    <property type="match status" value="1"/>
</dbReference>
<dbReference type="FunFam" id="2.40.50.1070:FF:000003">
    <property type="entry name" value="23S rRNA (Uracil-5-)-methyltransferase RumA"/>
    <property type="match status" value="1"/>
</dbReference>
<dbReference type="Gene3D" id="2.40.50.1070">
    <property type="match status" value="1"/>
</dbReference>
<dbReference type="Gene3D" id="2.40.50.140">
    <property type="entry name" value="Nucleic acid-binding proteins"/>
    <property type="match status" value="1"/>
</dbReference>
<dbReference type="Gene3D" id="3.40.50.150">
    <property type="entry name" value="Vaccinia Virus protein VP39"/>
    <property type="match status" value="1"/>
</dbReference>
<dbReference type="InterPro" id="IPR030390">
    <property type="entry name" value="MeTrfase_TrmA_AS"/>
</dbReference>
<dbReference type="InterPro" id="IPR030391">
    <property type="entry name" value="MeTrfase_TrmA_CS"/>
</dbReference>
<dbReference type="InterPro" id="IPR012340">
    <property type="entry name" value="NA-bd_OB-fold"/>
</dbReference>
<dbReference type="InterPro" id="IPR029063">
    <property type="entry name" value="SAM-dependent_MTases_sf"/>
</dbReference>
<dbReference type="InterPro" id="IPR002792">
    <property type="entry name" value="TRAM_dom"/>
</dbReference>
<dbReference type="InterPro" id="IPR010280">
    <property type="entry name" value="U5_MeTrfase_fam"/>
</dbReference>
<dbReference type="NCBIfam" id="TIGR00479">
    <property type="entry name" value="rumA"/>
    <property type="match status" value="1"/>
</dbReference>
<dbReference type="PANTHER" id="PTHR11061:SF45">
    <property type="match status" value="1"/>
</dbReference>
<dbReference type="PANTHER" id="PTHR11061">
    <property type="entry name" value="RNA M5U METHYLTRANSFERASE"/>
    <property type="match status" value="1"/>
</dbReference>
<dbReference type="Pfam" id="PF01938">
    <property type="entry name" value="TRAM"/>
    <property type="match status" value="1"/>
</dbReference>
<dbReference type="Pfam" id="PF05958">
    <property type="entry name" value="tRNA_U5-meth_tr"/>
    <property type="match status" value="1"/>
</dbReference>
<dbReference type="SUPFAM" id="SSF50249">
    <property type="entry name" value="Nucleic acid-binding proteins"/>
    <property type="match status" value="1"/>
</dbReference>
<dbReference type="SUPFAM" id="SSF53335">
    <property type="entry name" value="S-adenosyl-L-methionine-dependent methyltransferases"/>
    <property type="match status" value="1"/>
</dbReference>
<dbReference type="PROSITE" id="PS51687">
    <property type="entry name" value="SAM_MT_RNA_M5U"/>
    <property type="match status" value="1"/>
</dbReference>
<dbReference type="PROSITE" id="PS50926">
    <property type="entry name" value="TRAM"/>
    <property type="match status" value="1"/>
</dbReference>
<dbReference type="PROSITE" id="PS01230">
    <property type="entry name" value="TRMA_1"/>
    <property type="match status" value="1"/>
</dbReference>
<dbReference type="PROSITE" id="PS01231">
    <property type="entry name" value="TRMA_2"/>
    <property type="match status" value="1"/>
</dbReference>